<name>YIDD_METFK</name>
<keyword id="KW-0997">Cell inner membrane</keyword>
<keyword id="KW-1003">Cell membrane</keyword>
<keyword id="KW-0472">Membrane</keyword>
<keyword id="KW-1185">Reference proteome</keyword>
<feature type="chain" id="PRO_0000253125" description="Putative membrane protein insertion efficiency factor">
    <location>
        <begin position="1"/>
        <end position="70"/>
    </location>
</feature>
<comment type="function">
    <text evidence="1">Could be involved in insertion of integral membrane proteins into the membrane.</text>
</comment>
<comment type="subcellular location">
    <subcellularLocation>
        <location evidence="1">Cell inner membrane</location>
        <topology evidence="1">Peripheral membrane protein</topology>
        <orientation evidence="1">Cytoplasmic side</orientation>
    </subcellularLocation>
</comment>
<comment type="similarity">
    <text evidence="1">Belongs to the UPF0161 family.</text>
</comment>
<accession>Q1GXL5</accession>
<organism>
    <name type="scientific">Methylobacillus flagellatus (strain ATCC 51484 / DSM 6875 / VKM B-1610 / KT)</name>
    <dbReference type="NCBI Taxonomy" id="265072"/>
    <lineage>
        <taxon>Bacteria</taxon>
        <taxon>Pseudomonadati</taxon>
        <taxon>Pseudomonadota</taxon>
        <taxon>Betaproteobacteria</taxon>
        <taxon>Nitrosomonadales</taxon>
        <taxon>Methylophilaceae</taxon>
        <taxon>Methylobacillus</taxon>
    </lineage>
</organism>
<reference key="1">
    <citation type="submission" date="2006-03" db="EMBL/GenBank/DDBJ databases">
        <title>Complete sequence of Methylobacillus flagellatus KT.</title>
        <authorList>
            <consortium name="US DOE Joint Genome Institute"/>
            <person name="Copeland A."/>
            <person name="Lucas S."/>
            <person name="Lapidus A."/>
            <person name="Barry K."/>
            <person name="Detter J.C."/>
            <person name="Glavina del Rio T."/>
            <person name="Hammon N."/>
            <person name="Israni S."/>
            <person name="Dalin E."/>
            <person name="Tice H."/>
            <person name="Pitluck S."/>
            <person name="Brettin T."/>
            <person name="Bruce D."/>
            <person name="Han C."/>
            <person name="Tapia R."/>
            <person name="Saunders E."/>
            <person name="Gilna P."/>
            <person name="Schmutz J."/>
            <person name="Larimer F."/>
            <person name="Land M."/>
            <person name="Kyrpides N."/>
            <person name="Anderson I."/>
            <person name="Richardson P."/>
        </authorList>
    </citation>
    <scope>NUCLEOTIDE SEQUENCE [LARGE SCALE GENOMIC DNA]</scope>
    <source>
        <strain>ATCC 51484 / DSM 6875 / VKM B-1610 / KT</strain>
    </source>
</reference>
<proteinExistence type="inferred from homology"/>
<sequence length="70" mass="8040">MLARLLVGLIKLYQWTLSPLLGQRCRFYPTCSQYAVEAIQKHGAWRGAFFTICRLSKCHPWHDGGHDPVP</sequence>
<dbReference type="EMBL" id="CP000284">
    <property type="protein sequence ID" value="ABE51022.1"/>
    <property type="molecule type" value="Genomic_DNA"/>
</dbReference>
<dbReference type="RefSeq" id="WP_011480975.1">
    <property type="nucleotide sequence ID" value="NC_007947.1"/>
</dbReference>
<dbReference type="STRING" id="265072.Mfla_2759"/>
<dbReference type="KEGG" id="mfa:Mfla_2759"/>
<dbReference type="eggNOG" id="COG0759">
    <property type="taxonomic scope" value="Bacteria"/>
</dbReference>
<dbReference type="HOGENOM" id="CLU_144811_5_2_4"/>
<dbReference type="Proteomes" id="UP000002440">
    <property type="component" value="Chromosome"/>
</dbReference>
<dbReference type="GO" id="GO:0005886">
    <property type="term" value="C:plasma membrane"/>
    <property type="evidence" value="ECO:0007669"/>
    <property type="project" value="UniProtKB-SubCell"/>
</dbReference>
<dbReference type="HAMAP" id="MF_00386">
    <property type="entry name" value="UPF0161_YidD"/>
    <property type="match status" value="1"/>
</dbReference>
<dbReference type="InterPro" id="IPR002696">
    <property type="entry name" value="Membr_insert_effic_factor_YidD"/>
</dbReference>
<dbReference type="NCBIfam" id="TIGR00278">
    <property type="entry name" value="membrane protein insertion efficiency factor YidD"/>
    <property type="match status" value="1"/>
</dbReference>
<dbReference type="PANTHER" id="PTHR33383">
    <property type="entry name" value="MEMBRANE PROTEIN INSERTION EFFICIENCY FACTOR-RELATED"/>
    <property type="match status" value="1"/>
</dbReference>
<dbReference type="PANTHER" id="PTHR33383:SF1">
    <property type="entry name" value="MEMBRANE PROTEIN INSERTION EFFICIENCY FACTOR-RELATED"/>
    <property type="match status" value="1"/>
</dbReference>
<dbReference type="Pfam" id="PF01809">
    <property type="entry name" value="YidD"/>
    <property type="match status" value="1"/>
</dbReference>
<dbReference type="SMART" id="SM01234">
    <property type="entry name" value="Haemolytic"/>
    <property type="match status" value="1"/>
</dbReference>
<evidence type="ECO:0000255" key="1">
    <source>
        <dbReference type="HAMAP-Rule" id="MF_00386"/>
    </source>
</evidence>
<protein>
    <recommendedName>
        <fullName evidence="1">Putative membrane protein insertion efficiency factor</fullName>
    </recommendedName>
</protein>
<gene>
    <name type="ordered locus">Mfla_2759</name>
</gene>